<name>RPOA_SACHY</name>
<protein>
    <recommendedName>
        <fullName evidence="1">DNA-directed RNA polymerase subunit alpha</fullName>
        <shortName evidence="1">PEP</shortName>
        <ecNumber evidence="1">2.7.7.6</ecNumber>
    </recommendedName>
    <alternativeName>
        <fullName evidence="1">Plastid-encoded RNA polymerase subunit alpha</fullName>
        <shortName evidence="1">RNA polymerase subunit alpha</shortName>
    </alternativeName>
</protein>
<evidence type="ECO:0000255" key="1">
    <source>
        <dbReference type="HAMAP-Rule" id="MF_00059"/>
    </source>
</evidence>
<proteinExistence type="inferred from homology"/>
<keyword id="KW-0150">Chloroplast</keyword>
<keyword id="KW-0240">DNA-directed RNA polymerase</keyword>
<keyword id="KW-0548">Nucleotidyltransferase</keyword>
<keyword id="KW-0934">Plastid</keyword>
<keyword id="KW-0804">Transcription</keyword>
<keyword id="KW-0808">Transferase</keyword>
<sequence>MVREEITGSTQTLEWKCVESRVDSKRLYYGRFILSPLRKGQADTVGIALRRALLGEIEGTCITRAKFWNVPHEYSTIVGIEESIQEILLNLKEIVLRSNLYGVRDASICVKGPRYITAQDIILPPSVEIVDTTQPIANLREPVDFCIELQIKRDRGYHTELRKNSQDGSYPIDAVFMPVRNVNYSIFSCGNGNEKHEILFLEIWTNGSLTPKEALYEASRNLIDLFLPFIHTEEEGTSFEENKNRLTPPLLTFQKRFTNLKKNKKGIPLNCIFIDQLELPSRTYNCLKRANIHTLLDLLSKTEEDLMRINSFRMEDGKLIWDTLEKHLPIDLPKNKFSL</sequence>
<feature type="chain" id="PRO_0000175491" description="DNA-directed RNA polymerase subunit alpha">
    <location>
        <begin position="1"/>
        <end position="339"/>
    </location>
</feature>
<feature type="region of interest" description="Alpha N-terminal domain (alpha-NTD)" evidence="1">
    <location>
        <begin position="1"/>
        <end position="233"/>
    </location>
</feature>
<feature type="region of interest" description="Alpha C-terminal domain (alpha-CTD)" evidence="1">
    <location>
        <begin position="266"/>
        <end position="339"/>
    </location>
</feature>
<dbReference type="EC" id="2.7.7.6" evidence="1"/>
<dbReference type="EMBL" id="AE009947">
    <property type="protein sequence ID" value="AAT44723.1"/>
    <property type="molecule type" value="Genomic_DNA"/>
</dbReference>
<dbReference type="SMR" id="Q6L370"/>
<dbReference type="GO" id="GO:0009507">
    <property type="term" value="C:chloroplast"/>
    <property type="evidence" value="ECO:0007669"/>
    <property type="project" value="UniProtKB-SubCell"/>
</dbReference>
<dbReference type="GO" id="GO:0000428">
    <property type="term" value="C:DNA-directed RNA polymerase complex"/>
    <property type="evidence" value="ECO:0007669"/>
    <property type="project" value="UniProtKB-KW"/>
</dbReference>
<dbReference type="GO" id="GO:0005739">
    <property type="term" value="C:mitochondrion"/>
    <property type="evidence" value="ECO:0007669"/>
    <property type="project" value="GOC"/>
</dbReference>
<dbReference type="GO" id="GO:0003677">
    <property type="term" value="F:DNA binding"/>
    <property type="evidence" value="ECO:0007669"/>
    <property type="project" value="UniProtKB-UniRule"/>
</dbReference>
<dbReference type="GO" id="GO:0003899">
    <property type="term" value="F:DNA-directed RNA polymerase activity"/>
    <property type="evidence" value="ECO:0007669"/>
    <property type="project" value="UniProtKB-UniRule"/>
</dbReference>
<dbReference type="GO" id="GO:0046983">
    <property type="term" value="F:protein dimerization activity"/>
    <property type="evidence" value="ECO:0007669"/>
    <property type="project" value="InterPro"/>
</dbReference>
<dbReference type="GO" id="GO:0006351">
    <property type="term" value="P:DNA-templated transcription"/>
    <property type="evidence" value="ECO:0007669"/>
    <property type="project" value="UniProtKB-UniRule"/>
</dbReference>
<dbReference type="CDD" id="cd06928">
    <property type="entry name" value="RNAP_alpha_NTD"/>
    <property type="match status" value="1"/>
</dbReference>
<dbReference type="FunFam" id="1.10.150.20:FF:000021">
    <property type="entry name" value="DNA-directed RNA polymerase subunit alpha"/>
    <property type="match status" value="1"/>
</dbReference>
<dbReference type="FunFam" id="2.170.120.12:FF:000001">
    <property type="entry name" value="DNA-directed RNA polymerase subunit alpha"/>
    <property type="match status" value="1"/>
</dbReference>
<dbReference type="Gene3D" id="1.10.150.20">
    <property type="entry name" value="5' to 3' exonuclease, C-terminal subdomain"/>
    <property type="match status" value="1"/>
</dbReference>
<dbReference type="Gene3D" id="2.170.120.12">
    <property type="entry name" value="DNA-directed RNA polymerase, insert domain"/>
    <property type="match status" value="1"/>
</dbReference>
<dbReference type="Gene3D" id="3.30.1360.10">
    <property type="entry name" value="RNA polymerase, RBP11-like subunit"/>
    <property type="match status" value="1"/>
</dbReference>
<dbReference type="HAMAP" id="MF_00059">
    <property type="entry name" value="RNApol_bact_RpoA"/>
    <property type="match status" value="1"/>
</dbReference>
<dbReference type="InterPro" id="IPR011262">
    <property type="entry name" value="DNA-dir_RNA_pol_insert"/>
</dbReference>
<dbReference type="InterPro" id="IPR011263">
    <property type="entry name" value="DNA-dir_RNA_pol_RpoA/D/Rpb3"/>
</dbReference>
<dbReference type="InterPro" id="IPR011773">
    <property type="entry name" value="DNA-dir_RpoA"/>
</dbReference>
<dbReference type="InterPro" id="IPR036603">
    <property type="entry name" value="RBP11-like"/>
</dbReference>
<dbReference type="InterPro" id="IPR011260">
    <property type="entry name" value="RNAP_asu_C"/>
</dbReference>
<dbReference type="InterPro" id="IPR036643">
    <property type="entry name" value="RNApol_insert_sf"/>
</dbReference>
<dbReference type="NCBIfam" id="TIGR02027">
    <property type="entry name" value="rpoA"/>
    <property type="match status" value="1"/>
</dbReference>
<dbReference type="Pfam" id="PF01000">
    <property type="entry name" value="RNA_pol_A_bac"/>
    <property type="match status" value="1"/>
</dbReference>
<dbReference type="Pfam" id="PF03118">
    <property type="entry name" value="RNA_pol_A_CTD"/>
    <property type="match status" value="1"/>
</dbReference>
<dbReference type="Pfam" id="PF01193">
    <property type="entry name" value="RNA_pol_L"/>
    <property type="match status" value="1"/>
</dbReference>
<dbReference type="SMART" id="SM00662">
    <property type="entry name" value="RPOLD"/>
    <property type="match status" value="1"/>
</dbReference>
<dbReference type="SUPFAM" id="SSF47789">
    <property type="entry name" value="C-terminal domain of RNA polymerase alpha subunit"/>
    <property type="match status" value="1"/>
</dbReference>
<dbReference type="SUPFAM" id="SSF56553">
    <property type="entry name" value="Insert subdomain of RNA polymerase alpha subunit"/>
    <property type="match status" value="1"/>
</dbReference>
<dbReference type="SUPFAM" id="SSF55257">
    <property type="entry name" value="RBP11-like subunits of RNA polymerase"/>
    <property type="match status" value="1"/>
</dbReference>
<reference key="1">
    <citation type="journal article" date="2004" name="Curr. Genet.">
        <title>Structural features and transcript-editing analysis of sugarcane (Saccharum officinarum L.) chloroplast genome.</title>
        <authorList>
            <person name="Calsa T. Jr."/>
            <person name="Carraro D.M."/>
            <person name="Benatti M.R."/>
            <person name="Barbosa A.C."/>
            <person name="Kitajima J.P."/>
            <person name="Carrer H."/>
        </authorList>
    </citation>
    <scope>NUCLEOTIDE SEQUENCE [LARGE SCALE GENOMIC DNA]</scope>
    <source>
        <strain>cv. SP-80-3280</strain>
    </source>
</reference>
<organism>
    <name type="scientific">Saccharum hybrid</name>
    <name type="common">Sugarcane</name>
    <dbReference type="NCBI Taxonomy" id="15819"/>
    <lineage>
        <taxon>Eukaryota</taxon>
        <taxon>Viridiplantae</taxon>
        <taxon>Streptophyta</taxon>
        <taxon>Embryophyta</taxon>
        <taxon>Tracheophyta</taxon>
        <taxon>Spermatophyta</taxon>
        <taxon>Magnoliopsida</taxon>
        <taxon>Liliopsida</taxon>
        <taxon>Poales</taxon>
        <taxon>Poaceae</taxon>
        <taxon>PACMAD clade</taxon>
        <taxon>Panicoideae</taxon>
        <taxon>Andropogonodae</taxon>
        <taxon>Andropogoneae</taxon>
        <taxon>Saccharinae</taxon>
        <taxon>Saccharum</taxon>
    </lineage>
</organism>
<gene>
    <name evidence="1" type="primary">rpoA</name>
    <name type="ordered locus">PS157</name>
</gene>
<accession>Q6L370</accession>
<comment type="function">
    <text evidence="1">DNA-dependent RNA polymerase catalyzes the transcription of DNA into RNA using the four ribonucleoside triphosphates as substrates.</text>
</comment>
<comment type="catalytic activity">
    <reaction evidence="1">
        <text>RNA(n) + a ribonucleoside 5'-triphosphate = RNA(n+1) + diphosphate</text>
        <dbReference type="Rhea" id="RHEA:21248"/>
        <dbReference type="Rhea" id="RHEA-COMP:14527"/>
        <dbReference type="Rhea" id="RHEA-COMP:17342"/>
        <dbReference type="ChEBI" id="CHEBI:33019"/>
        <dbReference type="ChEBI" id="CHEBI:61557"/>
        <dbReference type="ChEBI" id="CHEBI:140395"/>
        <dbReference type="EC" id="2.7.7.6"/>
    </reaction>
</comment>
<comment type="subunit">
    <text evidence="1">In plastids the minimal PEP RNA polymerase catalytic core is composed of four subunits: alpha, beta, beta', and beta''. When a (nuclear-encoded) sigma factor is associated with the core the holoenzyme is formed, which can initiate transcription.</text>
</comment>
<comment type="subcellular location">
    <subcellularLocation>
        <location>Plastid</location>
        <location>Chloroplast</location>
    </subcellularLocation>
</comment>
<comment type="domain">
    <text evidence="1">The N-terminal domain is essential for RNAP assembly and basal transcription, whereas the C-terminal domain is involved in interaction with transcriptional regulators and with upstream promoter elements.</text>
</comment>
<comment type="similarity">
    <text evidence="1">Belongs to the RNA polymerase alpha chain family.</text>
</comment>
<geneLocation type="chloroplast"/>